<keyword id="KW-1185">Reference proteome</keyword>
<keyword id="KW-0687">Ribonucleoprotein</keyword>
<keyword id="KW-0689">Ribosomal protein</keyword>
<evidence type="ECO:0000255" key="1">
    <source>
        <dbReference type="HAMAP-Rule" id="MF_00508"/>
    </source>
</evidence>
<evidence type="ECO:0000305" key="2"/>
<name>RS10_CHRVO</name>
<organism>
    <name type="scientific">Chromobacterium violaceum (strain ATCC 12472 / DSM 30191 / JCM 1249 / CCUG 213 / NBRC 12614 / NCIMB 9131 / NCTC 9757 / MK)</name>
    <dbReference type="NCBI Taxonomy" id="243365"/>
    <lineage>
        <taxon>Bacteria</taxon>
        <taxon>Pseudomonadati</taxon>
        <taxon>Pseudomonadota</taxon>
        <taxon>Betaproteobacteria</taxon>
        <taxon>Neisseriales</taxon>
        <taxon>Chromobacteriaceae</taxon>
        <taxon>Chromobacterium</taxon>
    </lineage>
</organism>
<dbReference type="EMBL" id="AE016825">
    <property type="protein sequence ID" value="AAQ61847.1"/>
    <property type="molecule type" value="Genomic_DNA"/>
</dbReference>
<dbReference type="RefSeq" id="WP_011137734.1">
    <property type="nucleotide sequence ID" value="NC_005085.1"/>
</dbReference>
<dbReference type="SMR" id="Q7NQF1"/>
<dbReference type="STRING" id="243365.CV_4187"/>
<dbReference type="GeneID" id="97477814"/>
<dbReference type="KEGG" id="cvi:CV_4187"/>
<dbReference type="eggNOG" id="COG0051">
    <property type="taxonomic scope" value="Bacteria"/>
</dbReference>
<dbReference type="HOGENOM" id="CLU_122625_1_3_4"/>
<dbReference type="OrthoDB" id="9804464at2"/>
<dbReference type="Proteomes" id="UP000001424">
    <property type="component" value="Chromosome"/>
</dbReference>
<dbReference type="GO" id="GO:1990904">
    <property type="term" value="C:ribonucleoprotein complex"/>
    <property type="evidence" value="ECO:0007669"/>
    <property type="project" value="UniProtKB-KW"/>
</dbReference>
<dbReference type="GO" id="GO:0005840">
    <property type="term" value="C:ribosome"/>
    <property type="evidence" value="ECO:0007669"/>
    <property type="project" value="UniProtKB-KW"/>
</dbReference>
<dbReference type="GO" id="GO:0003735">
    <property type="term" value="F:structural constituent of ribosome"/>
    <property type="evidence" value="ECO:0007669"/>
    <property type="project" value="InterPro"/>
</dbReference>
<dbReference type="GO" id="GO:0000049">
    <property type="term" value="F:tRNA binding"/>
    <property type="evidence" value="ECO:0007669"/>
    <property type="project" value="UniProtKB-UniRule"/>
</dbReference>
<dbReference type="GO" id="GO:0006412">
    <property type="term" value="P:translation"/>
    <property type="evidence" value="ECO:0007669"/>
    <property type="project" value="UniProtKB-UniRule"/>
</dbReference>
<dbReference type="FunFam" id="3.30.70.600:FF:000001">
    <property type="entry name" value="30S ribosomal protein S10"/>
    <property type="match status" value="1"/>
</dbReference>
<dbReference type="Gene3D" id="3.30.70.600">
    <property type="entry name" value="Ribosomal protein S10 domain"/>
    <property type="match status" value="1"/>
</dbReference>
<dbReference type="HAMAP" id="MF_00508">
    <property type="entry name" value="Ribosomal_uS10"/>
    <property type="match status" value="1"/>
</dbReference>
<dbReference type="InterPro" id="IPR001848">
    <property type="entry name" value="Ribosomal_uS10"/>
</dbReference>
<dbReference type="InterPro" id="IPR018268">
    <property type="entry name" value="Ribosomal_uS10_CS"/>
</dbReference>
<dbReference type="InterPro" id="IPR027486">
    <property type="entry name" value="Ribosomal_uS10_dom"/>
</dbReference>
<dbReference type="InterPro" id="IPR036838">
    <property type="entry name" value="Ribosomal_uS10_dom_sf"/>
</dbReference>
<dbReference type="NCBIfam" id="NF001861">
    <property type="entry name" value="PRK00596.1"/>
    <property type="match status" value="1"/>
</dbReference>
<dbReference type="NCBIfam" id="TIGR01049">
    <property type="entry name" value="rpsJ_bact"/>
    <property type="match status" value="1"/>
</dbReference>
<dbReference type="PANTHER" id="PTHR11700">
    <property type="entry name" value="30S RIBOSOMAL PROTEIN S10 FAMILY MEMBER"/>
    <property type="match status" value="1"/>
</dbReference>
<dbReference type="Pfam" id="PF00338">
    <property type="entry name" value="Ribosomal_S10"/>
    <property type="match status" value="1"/>
</dbReference>
<dbReference type="PRINTS" id="PR00971">
    <property type="entry name" value="RIBOSOMALS10"/>
</dbReference>
<dbReference type="SMART" id="SM01403">
    <property type="entry name" value="Ribosomal_S10"/>
    <property type="match status" value="1"/>
</dbReference>
<dbReference type="SUPFAM" id="SSF54999">
    <property type="entry name" value="Ribosomal protein S10"/>
    <property type="match status" value="1"/>
</dbReference>
<dbReference type="PROSITE" id="PS00361">
    <property type="entry name" value="RIBOSOMAL_S10"/>
    <property type="match status" value="1"/>
</dbReference>
<proteinExistence type="inferred from homology"/>
<accession>Q7NQF1</accession>
<sequence length="103" mass="11704">MSSQKIRIRLKAFDYNLIDRSAQEIVETAKRTGAVVKGPVPLPTKIERFNVLRSPHVNKTSRDQLEIRTHLRLMDIVDPTDKTVDALMKLDLPAGVDVEIKLQ</sequence>
<feature type="chain" id="PRO_0000146520" description="Small ribosomal subunit protein uS10">
    <location>
        <begin position="1"/>
        <end position="103"/>
    </location>
</feature>
<gene>
    <name evidence="1" type="primary">rpsJ</name>
    <name type="ordered locus">CV_4187</name>
</gene>
<comment type="function">
    <text evidence="1">Involved in the binding of tRNA to the ribosomes.</text>
</comment>
<comment type="subunit">
    <text evidence="1">Part of the 30S ribosomal subunit.</text>
</comment>
<comment type="similarity">
    <text evidence="1">Belongs to the universal ribosomal protein uS10 family.</text>
</comment>
<protein>
    <recommendedName>
        <fullName evidence="1">Small ribosomal subunit protein uS10</fullName>
    </recommendedName>
    <alternativeName>
        <fullName evidence="2">30S ribosomal protein S10</fullName>
    </alternativeName>
</protein>
<reference key="1">
    <citation type="journal article" date="2003" name="Proc. Natl. Acad. Sci. U.S.A.">
        <title>The complete genome sequence of Chromobacterium violaceum reveals remarkable and exploitable bacterial adaptability.</title>
        <authorList>
            <person name="Vasconcelos A.T.R."/>
            <person name="de Almeida D.F."/>
            <person name="Hungria M."/>
            <person name="Guimaraes C.T."/>
            <person name="Antonio R.V."/>
            <person name="Almeida F.C."/>
            <person name="de Almeida L.G.P."/>
            <person name="de Almeida R."/>
            <person name="Alves-Gomes J.A."/>
            <person name="Andrade E.M."/>
            <person name="Araripe J."/>
            <person name="de Araujo M.F.F."/>
            <person name="Astolfi-Filho S."/>
            <person name="Azevedo V."/>
            <person name="Baptista A.J."/>
            <person name="Bataus L.A.M."/>
            <person name="Batista J.S."/>
            <person name="Belo A."/>
            <person name="van den Berg C."/>
            <person name="Bogo M."/>
            <person name="Bonatto S."/>
            <person name="Bordignon J."/>
            <person name="Brigido M.M."/>
            <person name="Brito C.A."/>
            <person name="Brocchi M."/>
            <person name="Burity H.A."/>
            <person name="Camargo A.A."/>
            <person name="Cardoso D.D.P."/>
            <person name="Carneiro N.P."/>
            <person name="Carraro D.M."/>
            <person name="Carvalho C.M.B."/>
            <person name="Cascardo J.C.M."/>
            <person name="Cavada B.S."/>
            <person name="Chueire L.M.O."/>
            <person name="Creczynski-Pasa T.B."/>
            <person name="Cunha-Junior N.C."/>
            <person name="Fagundes N."/>
            <person name="Falcao C.L."/>
            <person name="Fantinatti F."/>
            <person name="Farias I.P."/>
            <person name="Felipe M.S.S."/>
            <person name="Ferrari L.P."/>
            <person name="Ferro J.A."/>
            <person name="Ferro M.I.T."/>
            <person name="Franco G.R."/>
            <person name="Freitas N.S.A."/>
            <person name="Furlan L.R."/>
            <person name="Gazzinelli R.T."/>
            <person name="Gomes E.A."/>
            <person name="Goncalves P.R."/>
            <person name="Grangeiro T.B."/>
            <person name="Grattapaglia D."/>
            <person name="Grisard E.C."/>
            <person name="Hanna E.S."/>
            <person name="Jardim S.N."/>
            <person name="Laurino J."/>
            <person name="Leoi L.C.T."/>
            <person name="Lima L.F.A."/>
            <person name="Loureiro M.F."/>
            <person name="Lyra M.C.C.P."/>
            <person name="Madeira H.M.F."/>
            <person name="Manfio G.P."/>
            <person name="Maranhao A.Q."/>
            <person name="Martins W.S."/>
            <person name="di Mauro S.M.Z."/>
            <person name="de Medeiros S.R.B."/>
            <person name="Meissner R.V."/>
            <person name="Moreira M.A.M."/>
            <person name="Nascimento F.F."/>
            <person name="Nicolas M.F."/>
            <person name="Oliveira J.G."/>
            <person name="Oliveira S.C."/>
            <person name="Paixao R.F.C."/>
            <person name="Parente J.A."/>
            <person name="Pedrosa F.O."/>
            <person name="Pena S.D.J."/>
            <person name="Pereira J.O."/>
            <person name="Pereira M."/>
            <person name="Pinto L.S.R.C."/>
            <person name="Pinto L.S."/>
            <person name="Porto J.I.R."/>
            <person name="Potrich D.P."/>
            <person name="Ramalho-Neto C.E."/>
            <person name="Reis A.M.M."/>
            <person name="Rigo L.U."/>
            <person name="Rondinelli E."/>
            <person name="Santos E.B.P."/>
            <person name="Santos F.R."/>
            <person name="Schneider M.P.C."/>
            <person name="Seuanez H.N."/>
            <person name="Silva A.M.R."/>
            <person name="da Silva A.L.C."/>
            <person name="Silva D.W."/>
            <person name="Silva R."/>
            <person name="Simoes I.C."/>
            <person name="Simon D."/>
            <person name="Soares C.M.A."/>
            <person name="Soares R.B.A."/>
            <person name="Souza E.M."/>
            <person name="Souza K.R.L."/>
            <person name="Souza R.C."/>
            <person name="Steffens M.B.R."/>
            <person name="Steindel M."/>
            <person name="Teixeira S.R."/>
            <person name="Urmenyi T."/>
            <person name="Vettore A."/>
            <person name="Wassem R."/>
            <person name="Zaha A."/>
            <person name="Simpson A.J.G."/>
        </authorList>
    </citation>
    <scope>NUCLEOTIDE SEQUENCE [LARGE SCALE GENOMIC DNA]</scope>
    <source>
        <strain>ATCC 12472 / DSM 30191 / JCM 1249 / CCUG 213 / NBRC 12614 / NCIMB 9131 / NCTC 9757 / MK</strain>
    </source>
</reference>